<keyword id="KW-0378">Hydrolase</keyword>
<keyword id="KW-0511">Multifunctional enzyme</keyword>
<keyword id="KW-0658">Purine biosynthesis</keyword>
<keyword id="KW-0808">Transferase</keyword>
<dbReference type="EC" id="2.1.2.3" evidence="1"/>
<dbReference type="EC" id="3.5.4.10" evidence="1"/>
<dbReference type="EMBL" id="AP009049">
    <property type="protein sequence ID" value="BAH07431.1"/>
    <property type="molecule type" value="Genomic_DNA"/>
</dbReference>
<dbReference type="RefSeq" id="WP_012103026.1">
    <property type="nucleotide sequence ID" value="NC_011837.1"/>
</dbReference>
<dbReference type="SMR" id="B9E4K6"/>
<dbReference type="KEGG" id="ckr:CKR_2380"/>
<dbReference type="HOGENOM" id="CLU_016316_5_2_9"/>
<dbReference type="UniPathway" id="UPA00074">
    <property type="reaction ID" value="UER00133"/>
</dbReference>
<dbReference type="UniPathway" id="UPA00074">
    <property type="reaction ID" value="UER00135"/>
</dbReference>
<dbReference type="Proteomes" id="UP000007969">
    <property type="component" value="Chromosome"/>
</dbReference>
<dbReference type="GO" id="GO:0005829">
    <property type="term" value="C:cytosol"/>
    <property type="evidence" value="ECO:0007669"/>
    <property type="project" value="TreeGrafter"/>
</dbReference>
<dbReference type="GO" id="GO:0003937">
    <property type="term" value="F:IMP cyclohydrolase activity"/>
    <property type="evidence" value="ECO:0007669"/>
    <property type="project" value="UniProtKB-UniRule"/>
</dbReference>
<dbReference type="GO" id="GO:0004643">
    <property type="term" value="F:phosphoribosylaminoimidazolecarboxamide formyltransferase activity"/>
    <property type="evidence" value="ECO:0007669"/>
    <property type="project" value="UniProtKB-UniRule"/>
</dbReference>
<dbReference type="GO" id="GO:0006189">
    <property type="term" value="P:'de novo' IMP biosynthetic process"/>
    <property type="evidence" value="ECO:0007669"/>
    <property type="project" value="UniProtKB-UniRule"/>
</dbReference>
<dbReference type="CDD" id="cd01421">
    <property type="entry name" value="IMPCH"/>
    <property type="match status" value="1"/>
</dbReference>
<dbReference type="FunFam" id="3.40.140.20:FF:000001">
    <property type="entry name" value="Bifunctional purine biosynthesis protein PurH"/>
    <property type="match status" value="1"/>
</dbReference>
<dbReference type="FunFam" id="3.40.140.20:FF:000002">
    <property type="entry name" value="Bifunctional purine biosynthesis protein PurH"/>
    <property type="match status" value="1"/>
</dbReference>
<dbReference type="FunFam" id="3.40.50.1380:FF:000001">
    <property type="entry name" value="Bifunctional purine biosynthesis protein PurH"/>
    <property type="match status" value="1"/>
</dbReference>
<dbReference type="Gene3D" id="3.40.140.20">
    <property type="match status" value="2"/>
</dbReference>
<dbReference type="Gene3D" id="3.40.50.1380">
    <property type="entry name" value="Methylglyoxal synthase-like domain"/>
    <property type="match status" value="1"/>
</dbReference>
<dbReference type="HAMAP" id="MF_00139">
    <property type="entry name" value="PurH"/>
    <property type="match status" value="1"/>
</dbReference>
<dbReference type="InterPro" id="IPR024051">
    <property type="entry name" value="AICAR_Tfase_dup_dom_sf"/>
</dbReference>
<dbReference type="InterPro" id="IPR016193">
    <property type="entry name" value="Cytidine_deaminase-like"/>
</dbReference>
<dbReference type="InterPro" id="IPR011607">
    <property type="entry name" value="MGS-like_dom"/>
</dbReference>
<dbReference type="InterPro" id="IPR036914">
    <property type="entry name" value="MGS-like_dom_sf"/>
</dbReference>
<dbReference type="InterPro" id="IPR002695">
    <property type="entry name" value="PurH-like"/>
</dbReference>
<dbReference type="NCBIfam" id="NF002049">
    <property type="entry name" value="PRK00881.1"/>
    <property type="match status" value="1"/>
</dbReference>
<dbReference type="NCBIfam" id="TIGR00355">
    <property type="entry name" value="purH"/>
    <property type="match status" value="1"/>
</dbReference>
<dbReference type="PANTHER" id="PTHR11692:SF0">
    <property type="entry name" value="BIFUNCTIONAL PURINE BIOSYNTHESIS PROTEIN ATIC"/>
    <property type="match status" value="1"/>
</dbReference>
<dbReference type="PANTHER" id="PTHR11692">
    <property type="entry name" value="BIFUNCTIONAL PURINE BIOSYNTHESIS PROTEIN PURH"/>
    <property type="match status" value="1"/>
</dbReference>
<dbReference type="Pfam" id="PF01808">
    <property type="entry name" value="AICARFT_IMPCHas"/>
    <property type="match status" value="1"/>
</dbReference>
<dbReference type="Pfam" id="PF02142">
    <property type="entry name" value="MGS"/>
    <property type="match status" value="1"/>
</dbReference>
<dbReference type="PIRSF" id="PIRSF000414">
    <property type="entry name" value="AICARFT_IMPCHas"/>
    <property type="match status" value="1"/>
</dbReference>
<dbReference type="SMART" id="SM00798">
    <property type="entry name" value="AICARFT_IMPCHas"/>
    <property type="match status" value="1"/>
</dbReference>
<dbReference type="SMART" id="SM00851">
    <property type="entry name" value="MGS"/>
    <property type="match status" value="1"/>
</dbReference>
<dbReference type="SUPFAM" id="SSF53927">
    <property type="entry name" value="Cytidine deaminase-like"/>
    <property type="match status" value="1"/>
</dbReference>
<dbReference type="SUPFAM" id="SSF52335">
    <property type="entry name" value="Methylglyoxal synthase-like"/>
    <property type="match status" value="1"/>
</dbReference>
<dbReference type="PROSITE" id="PS51855">
    <property type="entry name" value="MGS"/>
    <property type="match status" value="1"/>
</dbReference>
<name>PUR9_CLOK1</name>
<organism>
    <name type="scientific">Clostridium kluyveri (strain NBRC 12016)</name>
    <dbReference type="NCBI Taxonomy" id="583346"/>
    <lineage>
        <taxon>Bacteria</taxon>
        <taxon>Bacillati</taxon>
        <taxon>Bacillota</taxon>
        <taxon>Clostridia</taxon>
        <taxon>Eubacteriales</taxon>
        <taxon>Clostridiaceae</taxon>
        <taxon>Clostridium</taxon>
    </lineage>
</organism>
<gene>
    <name evidence="1" type="primary">purH</name>
    <name type="ordered locus">CKR_2380</name>
</gene>
<comment type="catalytic activity">
    <reaction evidence="1">
        <text>(6R)-10-formyltetrahydrofolate + 5-amino-1-(5-phospho-beta-D-ribosyl)imidazole-4-carboxamide = 5-formamido-1-(5-phospho-D-ribosyl)imidazole-4-carboxamide + (6S)-5,6,7,8-tetrahydrofolate</text>
        <dbReference type="Rhea" id="RHEA:22192"/>
        <dbReference type="ChEBI" id="CHEBI:57453"/>
        <dbReference type="ChEBI" id="CHEBI:58467"/>
        <dbReference type="ChEBI" id="CHEBI:58475"/>
        <dbReference type="ChEBI" id="CHEBI:195366"/>
        <dbReference type="EC" id="2.1.2.3"/>
    </reaction>
</comment>
<comment type="catalytic activity">
    <reaction evidence="1">
        <text>IMP + H2O = 5-formamido-1-(5-phospho-D-ribosyl)imidazole-4-carboxamide</text>
        <dbReference type="Rhea" id="RHEA:18445"/>
        <dbReference type="ChEBI" id="CHEBI:15377"/>
        <dbReference type="ChEBI" id="CHEBI:58053"/>
        <dbReference type="ChEBI" id="CHEBI:58467"/>
        <dbReference type="EC" id="3.5.4.10"/>
    </reaction>
</comment>
<comment type="pathway">
    <text evidence="1">Purine metabolism; IMP biosynthesis via de novo pathway; 5-formamido-1-(5-phospho-D-ribosyl)imidazole-4-carboxamide from 5-amino-1-(5-phospho-D-ribosyl)imidazole-4-carboxamide (10-formyl THF route): step 1/1.</text>
</comment>
<comment type="pathway">
    <text evidence="1">Purine metabolism; IMP biosynthesis via de novo pathway; IMP from 5-formamido-1-(5-phospho-D-ribosyl)imidazole-4-carboxamide: step 1/1.</text>
</comment>
<comment type="domain">
    <text evidence="1">The IMP cyclohydrolase activity resides in the N-terminal region.</text>
</comment>
<comment type="similarity">
    <text evidence="1">Belongs to the PurH family.</text>
</comment>
<reference key="1">
    <citation type="submission" date="2005-09" db="EMBL/GenBank/DDBJ databases">
        <title>Complete genome sequence of Clostridium kluyveri and comparative genomics of Clostridia species.</title>
        <authorList>
            <person name="Inui M."/>
            <person name="Nonaka H."/>
            <person name="Shinoda Y."/>
            <person name="Ikenaga Y."/>
            <person name="Abe M."/>
            <person name="Naito K."/>
            <person name="Vertes A.A."/>
            <person name="Yukawa H."/>
        </authorList>
    </citation>
    <scope>NUCLEOTIDE SEQUENCE [LARGE SCALE GENOMIC DNA]</scope>
    <source>
        <strain>NBRC 12016</strain>
    </source>
</reference>
<proteinExistence type="inferred from homology"/>
<evidence type="ECO:0000255" key="1">
    <source>
        <dbReference type="HAMAP-Rule" id="MF_00139"/>
    </source>
</evidence>
<evidence type="ECO:0000255" key="2">
    <source>
        <dbReference type="PROSITE-ProRule" id="PRU01202"/>
    </source>
</evidence>
<sequence length="499" mass="55653">MINRALISVYNKEGLLELAQFLKNKGVELISTGGTYKYLEQNDIQVTEVSKITGFDEILDGRVKTLHPVIHSGILAKRDNKEHMDTIAKKDILPIDMVVVNLYPFFDKVDDNITFEEKVEFIDIGGPTMIRAAAKNFKDVIVVTDVGDYSKLIEEIDSKGDVPYDFRKKLAGKVFNLMSAYDGAISNFLLEEDYPEYLSLSYKKMDNLRYGENPHQSAAYYTATAGTAPMKDFTQLNGKQLSYNNIKDMDIAWKVVNEFEEICCVAVKHNTPCGVALGKDLYEAYVKTYECDPTSIFGGIIAVNRKLDVKTAEEISKIFVEIVIAPDFDEEALKVLMEKKNLRIIKCSVKPTNSMEIAKVDGGILVQSADDKLVENMEVVTDKKPSKEEINNLIFGMKVCKYVKSNAIVVVKDFMAKGIGGGQVNRIWPTCHALDRAGDGVVLASDAFFPFNDVVCEAAKYGIKAIIQPGGSVRDKDSIEECNKNGISMVFTGVRHFKH</sequence>
<feature type="chain" id="PRO_1000122954" description="Bifunctional purine biosynthesis protein PurH">
    <location>
        <begin position="1"/>
        <end position="499"/>
    </location>
</feature>
<feature type="domain" description="MGS-like" evidence="2">
    <location>
        <begin position="1"/>
        <end position="144"/>
    </location>
</feature>
<protein>
    <recommendedName>
        <fullName evidence="1">Bifunctional purine biosynthesis protein PurH</fullName>
    </recommendedName>
    <domain>
        <recommendedName>
            <fullName evidence="1">Phosphoribosylaminoimidazolecarboxamide formyltransferase</fullName>
            <ecNumber evidence="1">2.1.2.3</ecNumber>
        </recommendedName>
        <alternativeName>
            <fullName evidence="1">AICAR transformylase</fullName>
        </alternativeName>
    </domain>
    <domain>
        <recommendedName>
            <fullName evidence="1">IMP cyclohydrolase</fullName>
            <ecNumber evidence="1">3.5.4.10</ecNumber>
        </recommendedName>
        <alternativeName>
            <fullName evidence="1">ATIC</fullName>
        </alternativeName>
        <alternativeName>
            <fullName evidence="1">IMP synthase</fullName>
        </alternativeName>
        <alternativeName>
            <fullName evidence="1">Inosinicase</fullName>
        </alternativeName>
    </domain>
</protein>
<accession>B9E4K6</accession>